<comment type="function">
    <text evidence="1">Involved in the fatty acid remodeling steps of GPI-anchor maturation where the unsaturated acyl chain at sn-2 of inositol phosphate is replaced by a saturated stearoyl chain. May catalyze the second step of the fatty acid remodeling, by reacylating a lyso-GPI intermediate at sn-2 of inositol phosphate by a saturated chain. The fatty acid remodeling steps is critical for the integration of GPI-APs into lipid rafts.</text>
</comment>
<comment type="subcellular location">
    <subcellularLocation>
        <location evidence="2">Golgi apparatus membrane</location>
        <topology evidence="3">Multi-pass membrane protein</topology>
    </subcellularLocation>
</comment>
<comment type="similarity">
    <text evidence="4">Belongs to the PGAP2 family.</text>
</comment>
<name>PGAP2_DANRE</name>
<sequence length="231" mass="26490">MQQVPYGSVDRDKPLIRVPFTRLAVITVCLPLLGLVACIVLAMLYHYNDATYTHCQVPNYLPSISAAISLTPERYIWRFSIGLHSAPRFLVAAAYLSFYRGRFSRRLTEQLLSGFTFLLALSENVGLLLLTYVSSTETYSVHKSGFILFIGSSLFHMLCTCKLWSLIVKYSISSEEMMSYWFKLRLFLFNGGCCVLAVYFYRRHNTYCEEGITHASRCVSIWWCCPTWPST</sequence>
<reference key="1">
    <citation type="submission" date="2005-03" db="EMBL/GenBank/DDBJ databases">
        <authorList>
            <consortium name="NIH - Zebrafish Gene Collection (ZGC) project"/>
        </authorList>
    </citation>
    <scope>NUCLEOTIDE SEQUENCE [LARGE SCALE MRNA]</scope>
    <source>
        <tissue>Embryo</tissue>
    </source>
</reference>
<accession>Q5BL33</accession>
<proteinExistence type="evidence at transcript level"/>
<organism>
    <name type="scientific">Danio rerio</name>
    <name type="common">Zebrafish</name>
    <name type="synonym">Brachydanio rerio</name>
    <dbReference type="NCBI Taxonomy" id="7955"/>
    <lineage>
        <taxon>Eukaryota</taxon>
        <taxon>Metazoa</taxon>
        <taxon>Chordata</taxon>
        <taxon>Craniata</taxon>
        <taxon>Vertebrata</taxon>
        <taxon>Euteleostomi</taxon>
        <taxon>Actinopterygii</taxon>
        <taxon>Neopterygii</taxon>
        <taxon>Teleostei</taxon>
        <taxon>Ostariophysi</taxon>
        <taxon>Cypriniformes</taxon>
        <taxon>Danionidae</taxon>
        <taxon>Danioninae</taxon>
        <taxon>Danio</taxon>
    </lineage>
</organism>
<gene>
    <name evidence="2" type="primary">pgap2</name>
    <name type="synonym">frag1</name>
    <name type="ORF">zgc:101568</name>
</gene>
<keyword id="KW-0333">Golgi apparatus</keyword>
<keyword id="KW-0337">GPI-anchor biosynthesis</keyword>
<keyword id="KW-0472">Membrane</keyword>
<keyword id="KW-1185">Reference proteome</keyword>
<keyword id="KW-0808">Transferase</keyword>
<keyword id="KW-0812">Transmembrane</keyword>
<keyword id="KW-1133">Transmembrane helix</keyword>
<feature type="chain" id="PRO_0000326097" description="Acyltransferase PGAP2">
    <location>
        <begin position="1"/>
        <end position="231"/>
    </location>
</feature>
<feature type="topological domain" description="Cytoplasmic" evidence="3">
    <location>
        <begin position="1"/>
        <end position="22"/>
    </location>
</feature>
<feature type="transmembrane region" description="Helical" evidence="3">
    <location>
        <begin position="23"/>
        <end position="43"/>
    </location>
</feature>
<feature type="topological domain" description="Lumenal" evidence="3">
    <location>
        <begin position="44"/>
        <end position="78"/>
    </location>
</feature>
<feature type="transmembrane region" description="Helical" evidence="3">
    <location>
        <begin position="79"/>
        <end position="99"/>
    </location>
</feature>
<feature type="topological domain" description="Cytoplasmic" evidence="3">
    <location>
        <begin position="100"/>
        <end position="110"/>
    </location>
</feature>
<feature type="transmembrane region" description="Helical" evidence="3">
    <location>
        <begin position="111"/>
        <end position="131"/>
    </location>
</feature>
<feature type="topological domain" description="Lumenal" evidence="3">
    <location>
        <begin position="132"/>
        <end position="146"/>
    </location>
</feature>
<feature type="transmembrane region" description="Helical" evidence="3">
    <location>
        <begin position="147"/>
        <end position="167"/>
    </location>
</feature>
<feature type="topological domain" description="Cytoplasmic" evidence="3">
    <location>
        <begin position="168"/>
        <end position="179"/>
    </location>
</feature>
<feature type="transmembrane region" description="Helical" evidence="3">
    <location>
        <begin position="180"/>
        <end position="200"/>
    </location>
</feature>
<feature type="topological domain" description="Lumenal" evidence="3">
    <location>
        <begin position="201"/>
        <end position="231"/>
    </location>
</feature>
<protein>
    <recommendedName>
        <fullName evidence="4">Acyltransferase PGAP2</fullName>
        <ecNumber evidence="1">2.3.-.-</ecNumber>
    </recommendedName>
    <alternativeName>
        <fullName>FGF receptor-activating protein 1</fullName>
    </alternativeName>
    <alternativeName>
        <fullName>Post-GPI attachment to proteins factor 2</fullName>
    </alternativeName>
</protein>
<dbReference type="EC" id="2.3.-.-" evidence="1"/>
<dbReference type="EMBL" id="BC090817">
    <property type="protein sequence ID" value="AAH90817.1"/>
    <property type="molecule type" value="mRNA"/>
</dbReference>
<dbReference type="RefSeq" id="NP_001013562.1">
    <property type="nucleotide sequence ID" value="NM_001013544.2"/>
</dbReference>
<dbReference type="FunCoup" id="Q5BL33">
    <property type="interactions" value="1415"/>
</dbReference>
<dbReference type="STRING" id="7955.ENSDARP00000065502"/>
<dbReference type="PaxDb" id="7955-ENSDARP00000065502"/>
<dbReference type="GeneID" id="541417"/>
<dbReference type="KEGG" id="dre:541417"/>
<dbReference type="AGR" id="ZFIN:ZDB-GENE-050320-119"/>
<dbReference type="CTD" id="27315"/>
<dbReference type="ZFIN" id="ZDB-GENE-050320-119">
    <property type="gene designation" value="pgap2"/>
</dbReference>
<dbReference type="eggNOG" id="KOG3979">
    <property type="taxonomic scope" value="Eukaryota"/>
</dbReference>
<dbReference type="InParanoid" id="Q5BL33"/>
<dbReference type="OrthoDB" id="68581at2759"/>
<dbReference type="PhylomeDB" id="Q5BL33"/>
<dbReference type="PRO" id="PR:Q5BL33"/>
<dbReference type="Proteomes" id="UP000000437">
    <property type="component" value="Chromosome 21"/>
</dbReference>
<dbReference type="GO" id="GO:0005789">
    <property type="term" value="C:endoplasmic reticulum membrane"/>
    <property type="evidence" value="ECO:0000250"/>
    <property type="project" value="UniProtKB"/>
</dbReference>
<dbReference type="GO" id="GO:0000139">
    <property type="term" value="C:Golgi membrane"/>
    <property type="evidence" value="ECO:0000250"/>
    <property type="project" value="UniProtKB"/>
</dbReference>
<dbReference type="GO" id="GO:0006506">
    <property type="term" value="P:GPI anchor biosynthetic process"/>
    <property type="evidence" value="ECO:0000250"/>
    <property type="project" value="UniProtKB"/>
</dbReference>
<dbReference type="InterPro" id="IPR019402">
    <property type="entry name" value="Frag1/DRAM/Sfk1"/>
</dbReference>
<dbReference type="InterPro" id="IPR039545">
    <property type="entry name" value="PGAP2"/>
</dbReference>
<dbReference type="PANTHER" id="PTHR12892">
    <property type="entry name" value="FGF RECEPTOR ACTIVATING PROTEIN 1"/>
    <property type="match status" value="1"/>
</dbReference>
<dbReference type="PANTHER" id="PTHR12892:SF11">
    <property type="entry name" value="POST-GPI ATTACHMENT TO PROTEINS FACTOR 2"/>
    <property type="match status" value="1"/>
</dbReference>
<dbReference type="Pfam" id="PF10277">
    <property type="entry name" value="Frag1"/>
    <property type="match status" value="1"/>
</dbReference>
<evidence type="ECO:0000250" key="1">
    <source>
        <dbReference type="UniProtKB" id="Q2ABP2"/>
    </source>
</evidence>
<evidence type="ECO:0000250" key="2">
    <source>
        <dbReference type="UniProtKB" id="Q9UHJ9"/>
    </source>
</evidence>
<evidence type="ECO:0000255" key="3"/>
<evidence type="ECO:0000305" key="4"/>